<protein>
    <recommendedName>
        <fullName>Protein crossbronx</fullName>
    </recommendedName>
</protein>
<organism>
    <name type="scientific">Drosophila ananassae</name>
    <name type="common">Fruit fly</name>
    <dbReference type="NCBI Taxonomy" id="7217"/>
    <lineage>
        <taxon>Eukaryota</taxon>
        <taxon>Metazoa</taxon>
        <taxon>Ecdysozoa</taxon>
        <taxon>Arthropoda</taxon>
        <taxon>Hexapoda</taxon>
        <taxon>Insecta</taxon>
        <taxon>Pterygota</taxon>
        <taxon>Neoptera</taxon>
        <taxon>Endopterygota</taxon>
        <taxon>Diptera</taxon>
        <taxon>Brachycera</taxon>
        <taxon>Muscomorpha</taxon>
        <taxon>Ephydroidea</taxon>
        <taxon>Drosophilidae</taxon>
        <taxon>Drosophila</taxon>
        <taxon>Sophophora</taxon>
    </lineage>
</organism>
<proteinExistence type="inferred from homology"/>
<name>AKTP1_DROAN</name>
<evidence type="ECO:0000255" key="1">
    <source>
        <dbReference type="PROSITE-ProRule" id="PRU00388"/>
    </source>
</evidence>
<evidence type="ECO:0000305" key="2"/>
<reference key="1">
    <citation type="journal article" date="2007" name="Nature">
        <title>Evolution of genes and genomes on the Drosophila phylogeny.</title>
        <authorList>
            <consortium name="Drosophila 12 genomes consortium"/>
        </authorList>
    </citation>
    <scope>NUCLEOTIDE SEQUENCE [LARGE SCALE GENOMIC DNA]</scope>
    <source>
        <strain>Tucson 14024-0371.13</strain>
    </source>
</reference>
<gene>
    <name type="primary">cbx</name>
    <name type="ORF">GF13050</name>
</gene>
<dbReference type="EMBL" id="CH902619">
    <property type="protein sequence ID" value="EDV36617.1"/>
    <property type="molecule type" value="Genomic_DNA"/>
</dbReference>
<dbReference type="SMR" id="B3MEZ6"/>
<dbReference type="FunCoup" id="B3MEZ6">
    <property type="interactions" value="1022"/>
</dbReference>
<dbReference type="STRING" id="7217.B3MEZ6"/>
<dbReference type="EnsemblMetazoa" id="FBtr0117750">
    <property type="protein sequence ID" value="FBpp0116242"/>
    <property type="gene ID" value="FBgn0090083"/>
</dbReference>
<dbReference type="EnsemblMetazoa" id="XM_001959759.4">
    <property type="protein sequence ID" value="XP_001959795.1"/>
    <property type="gene ID" value="LOC6495893"/>
</dbReference>
<dbReference type="GeneID" id="6495893"/>
<dbReference type="KEGG" id="dan:6495893"/>
<dbReference type="CTD" id="47272"/>
<dbReference type="eggNOG" id="KOG0429">
    <property type="taxonomic scope" value="Eukaryota"/>
</dbReference>
<dbReference type="HOGENOM" id="CLU_083049_1_0_1"/>
<dbReference type="InParanoid" id="B3MEZ6"/>
<dbReference type="OMA" id="WGFPEWR"/>
<dbReference type="OrthoDB" id="5596422at2759"/>
<dbReference type="PhylomeDB" id="B3MEZ6"/>
<dbReference type="ChiTaRS" id="Ubx">
    <property type="organism name" value="fly"/>
</dbReference>
<dbReference type="Proteomes" id="UP000007801">
    <property type="component" value="Unassembled WGS sequence"/>
</dbReference>
<dbReference type="CDD" id="cd23814">
    <property type="entry name" value="UEV_AKTIP"/>
    <property type="match status" value="1"/>
</dbReference>
<dbReference type="FunFam" id="3.10.110.10:FF:000121">
    <property type="entry name" value="Protein crossbronx"/>
    <property type="match status" value="1"/>
</dbReference>
<dbReference type="Gene3D" id="3.10.110.10">
    <property type="entry name" value="Ubiquitin Conjugating Enzyme"/>
    <property type="match status" value="1"/>
</dbReference>
<dbReference type="InterPro" id="IPR050113">
    <property type="entry name" value="Ub_conjugating_enzyme"/>
</dbReference>
<dbReference type="InterPro" id="IPR000608">
    <property type="entry name" value="UBQ-conjugat_E2_core"/>
</dbReference>
<dbReference type="InterPro" id="IPR016135">
    <property type="entry name" value="UBQ-conjugating_enzyme/RWD"/>
</dbReference>
<dbReference type="PANTHER" id="PTHR24067">
    <property type="entry name" value="UBIQUITIN-CONJUGATING ENZYME E2"/>
    <property type="match status" value="1"/>
</dbReference>
<dbReference type="Pfam" id="PF00179">
    <property type="entry name" value="UQ_con"/>
    <property type="match status" value="1"/>
</dbReference>
<dbReference type="SMART" id="SM00212">
    <property type="entry name" value="UBCc"/>
    <property type="match status" value="1"/>
</dbReference>
<dbReference type="SUPFAM" id="SSF54495">
    <property type="entry name" value="UBC-like"/>
    <property type="match status" value="1"/>
</dbReference>
<dbReference type="PROSITE" id="PS50127">
    <property type="entry name" value="UBC_2"/>
    <property type="match status" value="1"/>
</dbReference>
<sequence>MTLDLDASKKDEKLLITTIQQEYKILAEYKMIESEKLSGIYVIPSYENSLQWYGVFFGRQGFYAESVFRFSILLPDRFPDEKSLPSIIFQQDVMHPHVCPFTHTLDISHAFSEWRCGEDHLWQVLKYMQAIFFDPVDSIRGIETDKLKNAEAAELLMNNRQEYAARVQENIKESKAHIYDTPPTEDPHYIVFEKFQPDVHGPVLERIKAGRNKAEASQQANGGHATGLSWVKEGEFKPLSIE</sequence>
<keyword id="KW-1185">Reference proteome</keyword>
<accession>B3MEZ6</accession>
<feature type="chain" id="PRO_0000379029" description="Protein crossbronx">
    <location>
        <begin position="1"/>
        <end position="242"/>
    </location>
</feature>
<feature type="domain" description="UBC core" evidence="1">
    <location>
        <begin position="20"/>
        <end position="176"/>
    </location>
</feature>
<comment type="similarity">
    <text evidence="1">Belongs to the ubiquitin-conjugating enzyme family. FTS subfamily.</text>
</comment>
<comment type="caution">
    <text evidence="2">Lacks the conserved Cys residue necessary for ubiquitin-conjugating enzyme E2 activity.</text>
</comment>